<organism>
    <name type="scientific">Bacillus thuringiensis subsp. konkukian (strain 97-27)</name>
    <dbReference type="NCBI Taxonomy" id="281309"/>
    <lineage>
        <taxon>Bacteria</taxon>
        <taxon>Bacillati</taxon>
        <taxon>Bacillota</taxon>
        <taxon>Bacilli</taxon>
        <taxon>Bacillales</taxon>
        <taxon>Bacillaceae</taxon>
        <taxon>Bacillus</taxon>
        <taxon>Bacillus cereus group</taxon>
    </lineage>
</organism>
<proteinExistence type="inferred from homology"/>
<accession>Q6HMG1</accession>
<reference key="1">
    <citation type="journal article" date="2006" name="J. Bacteriol.">
        <title>Pathogenomic sequence analysis of Bacillus cereus and Bacillus thuringiensis isolates closely related to Bacillus anthracis.</title>
        <authorList>
            <person name="Han C.S."/>
            <person name="Xie G."/>
            <person name="Challacombe J.F."/>
            <person name="Altherr M.R."/>
            <person name="Bhotika S.S."/>
            <person name="Bruce D."/>
            <person name="Campbell C.S."/>
            <person name="Campbell M.L."/>
            <person name="Chen J."/>
            <person name="Chertkov O."/>
            <person name="Cleland C."/>
            <person name="Dimitrijevic M."/>
            <person name="Doggett N.A."/>
            <person name="Fawcett J.J."/>
            <person name="Glavina T."/>
            <person name="Goodwin L.A."/>
            <person name="Hill K.K."/>
            <person name="Hitchcock P."/>
            <person name="Jackson P.J."/>
            <person name="Keim P."/>
            <person name="Kewalramani A.R."/>
            <person name="Longmire J."/>
            <person name="Lucas S."/>
            <person name="Malfatti S."/>
            <person name="McMurry K."/>
            <person name="Meincke L.J."/>
            <person name="Misra M."/>
            <person name="Moseman B.L."/>
            <person name="Mundt M."/>
            <person name="Munk A.C."/>
            <person name="Okinaka R.T."/>
            <person name="Parson-Quintana B."/>
            <person name="Reilly L.P."/>
            <person name="Richardson P."/>
            <person name="Robinson D.L."/>
            <person name="Rubin E."/>
            <person name="Saunders E."/>
            <person name="Tapia R."/>
            <person name="Tesmer J.G."/>
            <person name="Thayer N."/>
            <person name="Thompson L.S."/>
            <person name="Tice H."/>
            <person name="Ticknor L.O."/>
            <person name="Wills P.L."/>
            <person name="Brettin T.S."/>
            <person name="Gilna P."/>
        </authorList>
    </citation>
    <scope>NUCLEOTIDE SEQUENCE [LARGE SCALE GENOMIC DNA]</scope>
    <source>
        <strain>97-27</strain>
    </source>
</reference>
<gene>
    <name type="ordered locus">BT9727_0921</name>
</gene>
<comment type="similarity">
    <text evidence="1">Belongs to the UPF0145 family.</text>
</comment>
<evidence type="ECO:0000255" key="1">
    <source>
        <dbReference type="HAMAP-Rule" id="MF_00338"/>
    </source>
</evidence>
<feature type="chain" id="PRO_0000225810" description="UPF0145 protein BT9727_0921">
    <location>
        <begin position="1"/>
        <end position="103"/>
    </location>
</feature>
<sequence length="103" mass="11035">MIVTTTSGIQGKEIIEYIDIVNGEAIMGANIVRDLFASVRDVVGGRAGSYESKLKEARDIAMDEMKELAKQKGANAIVGVDVDYEVVRDGMLMVAVSGTAVRI</sequence>
<name>Y921_BACHK</name>
<protein>
    <recommendedName>
        <fullName evidence="1">UPF0145 protein BT9727_0921</fullName>
    </recommendedName>
</protein>
<dbReference type="EMBL" id="AE017355">
    <property type="protein sequence ID" value="AAT59247.1"/>
    <property type="molecule type" value="Genomic_DNA"/>
</dbReference>
<dbReference type="RefSeq" id="WP_000637511.1">
    <property type="nucleotide sequence ID" value="NC_006578.1"/>
</dbReference>
<dbReference type="RefSeq" id="YP_035260.1">
    <property type="nucleotide sequence ID" value="NC_005957.1"/>
</dbReference>
<dbReference type="RefSeq" id="YP_173282.1">
    <property type="nucleotide sequence ID" value="NC_006578.1"/>
</dbReference>
<dbReference type="SMR" id="Q6HMG1"/>
<dbReference type="KEGG" id="btk:BT9727_0921"/>
<dbReference type="HOGENOM" id="CLU_117144_3_2_9"/>
<dbReference type="Proteomes" id="UP000001301">
    <property type="component" value="Chromosome"/>
</dbReference>
<dbReference type="Gene3D" id="3.30.110.70">
    <property type="entry name" value="Hypothetical protein apc22750. Chain B"/>
    <property type="match status" value="1"/>
</dbReference>
<dbReference type="HAMAP" id="MF_00338">
    <property type="entry name" value="UPF0145"/>
    <property type="match status" value="1"/>
</dbReference>
<dbReference type="InterPro" id="IPR035439">
    <property type="entry name" value="UPF0145_dom_sf"/>
</dbReference>
<dbReference type="InterPro" id="IPR002765">
    <property type="entry name" value="UPF0145_YbjQ-like"/>
</dbReference>
<dbReference type="NCBIfam" id="NF009495">
    <property type="entry name" value="PRK12855.1"/>
    <property type="match status" value="1"/>
</dbReference>
<dbReference type="NCBIfam" id="NF009496">
    <property type="entry name" value="PRK12856.1"/>
    <property type="match status" value="1"/>
</dbReference>
<dbReference type="PANTHER" id="PTHR34068">
    <property type="entry name" value="UPF0145 PROTEIN YBJQ"/>
    <property type="match status" value="1"/>
</dbReference>
<dbReference type="PANTHER" id="PTHR34068:SF1">
    <property type="entry name" value="UPF0145 PROTEIN YBJQ"/>
    <property type="match status" value="1"/>
</dbReference>
<dbReference type="Pfam" id="PF01906">
    <property type="entry name" value="YbjQ_1"/>
    <property type="match status" value="1"/>
</dbReference>
<dbReference type="SUPFAM" id="SSF117782">
    <property type="entry name" value="YbjQ-like"/>
    <property type="match status" value="1"/>
</dbReference>